<proteinExistence type="inferred from homology"/>
<feature type="chain" id="PRO_0000200662" description="Protein Wnt-10">
    <location>
        <begin position="1" status="less than"/>
        <end position="113" status="greater than"/>
    </location>
</feature>
<feature type="lipid moiety-binding region" description="O-palmitoleoyl serine; by PORCN" evidence="3">
    <location>
        <position position="1"/>
    </location>
</feature>
<feature type="disulfide bond" evidence="2">
    <location>
        <begin position="79"/>
        <end position="94"/>
    </location>
</feature>
<feature type="non-terminal residue">
    <location>
        <position position="1"/>
    </location>
</feature>
<feature type="non-terminal residue">
    <location>
        <position position="113"/>
    </location>
</feature>
<protein>
    <recommendedName>
        <fullName>Protein Wnt-10</fullName>
    </recommendedName>
</protein>
<sequence length="113" mass="12563">SGSCQLKTCWQVSPDFRSVGDTLREKFQSALFLPLHNGHGGIGGLLVPRDTQLVYFERSPTFCEQEDDIGSPGTRGRLCERTEQGFSGCSSMCCGRGHNVVRETRVERCNCKF</sequence>
<reference key="1">
    <citation type="journal article" date="1992" name="Proc. Natl. Acad. Sci. U.S.A.">
        <title>Diversification of the Wnt gene family on the ancestral lineage of vertebrates.</title>
        <authorList>
            <person name="Sidow A."/>
        </authorList>
    </citation>
    <scope>NUCLEOTIDE SEQUENCE [GENOMIC DNA]</scope>
</reference>
<evidence type="ECO:0000250" key="1">
    <source>
        <dbReference type="UniProtKB" id="P27467"/>
    </source>
</evidence>
<evidence type="ECO:0000250" key="2">
    <source>
        <dbReference type="UniProtKB" id="P28026"/>
    </source>
</evidence>
<evidence type="ECO:0000250" key="3">
    <source>
        <dbReference type="UniProtKB" id="P56704"/>
    </source>
</evidence>
<evidence type="ECO:0000305" key="4"/>
<name>WNT10_EPTST</name>
<organism>
    <name type="scientific">Eptatretus stoutii</name>
    <name type="common">Pacific hagfish</name>
    <dbReference type="NCBI Taxonomy" id="7765"/>
    <lineage>
        <taxon>Eukaryota</taxon>
        <taxon>Metazoa</taxon>
        <taxon>Chordata</taxon>
        <taxon>Craniata</taxon>
        <taxon>Vertebrata</taxon>
        <taxon>Cyclostomata</taxon>
        <taxon>Myxini</taxon>
        <taxon>Myxiniformes</taxon>
        <taxon>Myxinidae</taxon>
        <taxon>Eptatretinae</taxon>
        <taxon>Eptatretus</taxon>
    </lineage>
</organism>
<gene>
    <name type="primary">WNT-10</name>
</gene>
<accession>P28112</accession>
<dbReference type="EMBL" id="M91263">
    <property type="protein sequence ID" value="AAA49245.1"/>
    <property type="molecule type" value="Genomic_DNA"/>
</dbReference>
<dbReference type="SMR" id="P28112"/>
<dbReference type="GO" id="GO:0005615">
    <property type="term" value="C:extracellular space"/>
    <property type="evidence" value="ECO:0007669"/>
    <property type="project" value="TreeGrafter"/>
</dbReference>
<dbReference type="GO" id="GO:0005125">
    <property type="term" value="F:cytokine activity"/>
    <property type="evidence" value="ECO:0007669"/>
    <property type="project" value="TreeGrafter"/>
</dbReference>
<dbReference type="GO" id="GO:0005109">
    <property type="term" value="F:frizzled binding"/>
    <property type="evidence" value="ECO:0007669"/>
    <property type="project" value="TreeGrafter"/>
</dbReference>
<dbReference type="GO" id="GO:0060070">
    <property type="term" value="P:canonical Wnt signaling pathway"/>
    <property type="evidence" value="ECO:0007669"/>
    <property type="project" value="TreeGrafter"/>
</dbReference>
<dbReference type="GO" id="GO:0045165">
    <property type="term" value="P:cell fate commitment"/>
    <property type="evidence" value="ECO:0007669"/>
    <property type="project" value="TreeGrafter"/>
</dbReference>
<dbReference type="GO" id="GO:0030182">
    <property type="term" value="P:neuron differentiation"/>
    <property type="evidence" value="ECO:0007669"/>
    <property type="project" value="TreeGrafter"/>
</dbReference>
<dbReference type="Gene3D" id="3.30.2460.20">
    <property type="match status" value="1"/>
</dbReference>
<dbReference type="InterPro" id="IPR005817">
    <property type="entry name" value="Wnt"/>
</dbReference>
<dbReference type="InterPro" id="IPR043158">
    <property type="entry name" value="Wnt_C"/>
</dbReference>
<dbReference type="PANTHER" id="PTHR12027:SF98">
    <property type="entry name" value="PROTEIN WNT"/>
    <property type="match status" value="1"/>
</dbReference>
<dbReference type="PANTHER" id="PTHR12027">
    <property type="entry name" value="WNT RELATED"/>
    <property type="match status" value="1"/>
</dbReference>
<dbReference type="Pfam" id="PF00110">
    <property type="entry name" value="wnt"/>
    <property type="match status" value="1"/>
</dbReference>
<dbReference type="SMART" id="SM00097">
    <property type="entry name" value="WNT1"/>
    <property type="match status" value="1"/>
</dbReference>
<keyword id="KW-0217">Developmental protein</keyword>
<keyword id="KW-1015">Disulfide bond</keyword>
<keyword id="KW-0272">Extracellular matrix</keyword>
<keyword id="KW-0449">Lipoprotein</keyword>
<keyword id="KW-0964">Secreted</keyword>
<keyword id="KW-0879">Wnt signaling pathway</keyword>
<comment type="function">
    <text>Ligand for members of the frizzled family of seven transmembrane receptors. Probable developmental protein. May be a signaling molecule which affects the development of discrete regions of tissues. Is likely to signal over only few cell diameters.</text>
</comment>
<comment type="subcellular location">
    <subcellularLocation>
        <location>Secreted</location>
        <location>Extracellular space</location>
        <location>Extracellular matrix</location>
    </subcellularLocation>
</comment>
<comment type="PTM">
    <text evidence="1 3">Palmitoleoylation is required for efficient binding to frizzled receptors. Depalmitoleoylation leads to Wnt signaling pathway inhibition.</text>
</comment>
<comment type="similarity">
    <text evidence="4">Belongs to the Wnt family.</text>
</comment>